<protein>
    <recommendedName>
        <fullName evidence="1">Malate dehydrogenase</fullName>
        <ecNumber evidence="1">1.1.1.37</ecNumber>
    </recommendedName>
</protein>
<accession>P0C7R5</accession>
<accession>P61893</accession>
<accession>Q66F80</accession>
<accession>Q9ETQ6</accession>
<organism>
    <name type="scientific">Yersinia pseudotuberculosis serotype I (strain IP32953)</name>
    <dbReference type="NCBI Taxonomy" id="273123"/>
    <lineage>
        <taxon>Bacteria</taxon>
        <taxon>Pseudomonadati</taxon>
        <taxon>Pseudomonadota</taxon>
        <taxon>Gammaproteobacteria</taxon>
        <taxon>Enterobacterales</taxon>
        <taxon>Yersiniaceae</taxon>
        <taxon>Yersinia</taxon>
    </lineage>
</organism>
<keyword id="KW-0520">NAD</keyword>
<keyword id="KW-0560">Oxidoreductase</keyword>
<keyword id="KW-0816">Tricarboxylic acid cycle</keyword>
<dbReference type="EC" id="1.1.1.37" evidence="1"/>
<dbReference type="EMBL" id="BX936398">
    <property type="protein sequence ID" value="CAH19700.1"/>
    <property type="molecule type" value="Genomic_DNA"/>
</dbReference>
<dbReference type="RefSeq" id="WP_002210174.1">
    <property type="nucleotide sequence ID" value="NZ_CP009712.1"/>
</dbReference>
<dbReference type="SMR" id="P0C7R5"/>
<dbReference type="GeneID" id="57975198"/>
<dbReference type="KEGG" id="ypo:BZ17_2105"/>
<dbReference type="KEGG" id="yps:YPTB0460"/>
<dbReference type="PATRIC" id="fig|273123.14.peg.2231"/>
<dbReference type="Proteomes" id="UP000001011">
    <property type="component" value="Chromosome"/>
</dbReference>
<dbReference type="GO" id="GO:0005737">
    <property type="term" value="C:cytoplasm"/>
    <property type="evidence" value="ECO:0007669"/>
    <property type="project" value="TreeGrafter"/>
</dbReference>
<dbReference type="GO" id="GO:0030060">
    <property type="term" value="F:L-malate dehydrogenase (NAD+) activity"/>
    <property type="evidence" value="ECO:0007669"/>
    <property type="project" value="UniProtKB-UniRule"/>
</dbReference>
<dbReference type="GO" id="GO:0006108">
    <property type="term" value="P:malate metabolic process"/>
    <property type="evidence" value="ECO:0007669"/>
    <property type="project" value="InterPro"/>
</dbReference>
<dbReference type="GO" id="GO:0006099">
    <property type="term" value="P:tricarboxylic acid cycle"/>
    <property type="evidence" value="ECO:0007669"/>
    <property type="project" value="UniProtKB-UniRule"/>
</dbReference>
<dbReference type="CDD" id="cd01337">
    <property type="entry name" value="MDH_glyoxysomal_mitochondrial"/>
    <property type="match status" value="1"/>
</dbReference>
<dbReference type="FunFam" id="3.40.50.720:FF:000017">
    <property type="entry name" value="Malate dehydrogenase"/>
    <property type="match status" value="1"/>
</dbReference>
<dbReference type="FunFam" id="3.90.110.10:FF:000001">
    <property type="entry name" value="Malate dehydrogenase"/>
    <property type="match status" value="1"/>
</dbReference>
<dbReference type="Gene3D" id="3.90.110.10">
    <property type="entry name" value="Lactate dehydrogenase/glycoside hydrolase, family 4, C-terminal"/>
    <property type="match status" value="1"/>
</dbReference>
<dbReference type="Gene3D" id="3.40.50.720">
    <property type="entry name" value="NAD(P)-binding Rossmann-like Domain"/>
    <property type="match status" value="1"/>
</dbReference>
<dbReference type="HAMAP" id="MF_01516">
    <property type="entry name" value="Malate_dehydrog_1"/>
    <property type="match status" value="1"/>
</dbReference>
<dbReference type="InterPro" id="IPR001557">
    <property type="entry name" value="L-lactate/malate_DH"/>
</dbReference>
<dbReference type="InterPro" id="IPR022383">
    <property type="entry name" value="Lactate/malate_DH_C"/>
</dbReference>
<dbReference type="InterPro" id="IPR001236">
    <property type="entry name" value="Lactate/malate_DH_N"/>
</dbReference>
<dbReference type="InterPro" id="IPR015955">
    <property type="entry name" value="Lactate_DH/Glyco_Ohase_4_C"/>
</dbReference>
<dbReference type="InterPro" id="IPR001252">
    <property type="entry name" value="Malate_DH_AS"/>
</dbReference>
<dbReference type="InterPro" id="IPR010097">
    <property type="entry name" value="Malate_DH_type1"/>
</dbReference>
<dbReference type="InterPro" id="IPR023958">
    <property type="entry name" value="Malate_DH_type1_bac"/>
</dbReference>
<dbReference type="InterPro" id="IPR036291">
    <property type="entry name" value="NAD(P)-bd_dom_sf"/>
</dbReference>
<dbReference type="NCBIfam" id="TIGR01772">
    <property type="entry name" value="MDH_euk_gproteo"/>
    <property type="match status" value="1"/>
</dbReference>
<dbReference type="PANTHER" id="PTHR11540">
    <property type="entry name" value="MALATE AND LACTATE DEHYDROGENASE"/>
    <property type="match status" value="1"/>
</dbReference>
<dbReference type="PANTHER" id="PTHR11540:SF16">
    <property type="entry name" value="MALATE DEHYDROGENASE, MITOCHONDRIAL"/>
    <property type="match status" value="1"/>
</dbReference>
<dbReference type="Pfam" id="PF02866">
    <property type="entry name" value="Ldh_1_C"/>
    <property type="match status" value="1"/>
</dbReference>
<dbReference type="Pfam" id="PF00056">
    <property type="entry name" value="Ldh_1_N"/>
    <property type="match status" value="1"/>
</dbReference>
<dbReference type="PIRSF" id="PIRSF000102">
    <property type="entry name" value="Lac_mal_DH"/>
    <property type="match status" value="1"/>
</dbReference>
<dbReference type="SUPFAM" id="SSF56327">
    <property type="entry name" value="LDH C-terminal domain-like"/>
    <property type="match status" value="1"/>
</dbReference>
<dbReference type="SUPFAM" id="SSF51735">
    <property type="entry name" value="NAD(P)-binding Rossmann-fold domains"/>
    <property type="match status" value="1"/>
</dbReference>
<dbReference type="PROSITE" id="PS00068">
    <property type="entry name" value="MDH"/>
    <property type="match status" value="1"/>
</dbReference>
<proteinExistence type="inferred from homology"/>
<evidence type="ECO:0000255" key="1">
    <source>
        <dbReference type="HAMAP-Rule" id="MF_01516"/>
    </source>
</evidence>
<name>MDH_YERPS</name>
<reference key="1">
    <citation type="journal article" date="2004" name="Proc. Natl. Acad. Sci. U.S.A.">
        <title>Insights into the evolution of Yersinia pestis through whole-genome comparison with Yersinia pseudotuberculosis.</title>
        <authorList>
            <person name="Chain P.S.G."/>
            <person name="Carniel E."/>
            <person name="Larimer F.W."/>
            <person name="Lamerdin J."/>
            <person name="Stoutland P.O."/>
            <person name="Regala W.M."/>
            <person name="Georgescu A.M."/>
            <person name="Vergez L.M."/>
            <person name="Land M.L."/>
            <person name="Motin V.L."/>
            <person name="Brubaker R.R."/>
            <person name="Fowler J."/>
            <person name="Hinnebusch J."/>
            <person name="Marceau M."/>
            <person name="Medigue C."/>
            <person name="Simonet M."/>
            <person name="Chenal-Francisque V."/>
            <person name="Souza B."/>
            <person name="Dacheux D."/>
            <person name="Elliott J.M."/>
            <person name="Derbise A."/>
            <person name="Hauser L.J."/>
            <person name="Garcia E."/>
        </authorList>
    </citation>
    <scope>NUCLEOTIDE SEQUENCE [LARGE SCALE GENOMIC DNA]</scope>
    <source>
        <strain>IP32953</strain>
    </source>
</reference>
<sequence>MKVAVLGAAGGIGQALALLLKTQLPSGSDLSLYDIAPVTPGVAVDLSHIPTAVNIKGFSGEDATPALQGADIVLISAGVARKPGMDRSDLFNVNAGIVRNLVEQIARTCPNALIGIITNPVNTTVAIAAEVLKKAGVYDKNKLFGITTLDTIRSNTFVAELKGKQPQDIEVPVIGGHSGVTILPLLSQIPGVSFTEQEVADLTKRIQNAGTEVVEAKAGGGSATLSMGQAAARFGLSLVRALQGESNVVECSYVEGDGKYARFFAQPILLGKNGVAERKDIGKLSAFEQQALENMLDVLHKDIELGEKFVNQ</sequence>
<gene>
    <name evidence="1" type="primary">mdh</name>
    <name type="ordered locus">YPTB0460</name>
</gene>
<comment type="function">
    <text evidence="1">Catalyzes the reversible oxidation of malate to oxaloacetate.</text>
</comment>
<comment type="catalytic activity">
    <reaction evidence="1">
        <text>(S)-malate + NAD(+) = oxaloacetate + NADH + H(+)</text>
        <dbReference type="Rhea" id="RHEA:21432"/>
        <dbReference type="ChEBI" id="CHEBI:15378"/>
        <dbReference type="ChEBI" id="CHEBI:15589"/>
        <dbReference type="ChEBI" id="CHEBI:16452"/>
        <dbReference type="ChEBI" id="CHEBI:57540"/>
        <dbReference type="ChEBI" id="CHEBI:57945"/>
        <dbReference type="EC" id="1.1.1.37"/>
    </reaction>
</comment>
<comment type="subunit">
    <text evidence="1">Homodimer.</text>
</comment>
<comment type="similarity">
    <text evidence="1">Belongs to the LDH/MDH superfamily. MDH type 1 family.</text>
</comment>
<feature type="chain" id="PRO_0000113336" description="Malate dehydrogenase">
    <location>
        <begin position="1"/>
        <end position="312"/>
    </location>
</feature>
<feature type="active site" description="Proton acceptor" evidence="1">
    <location>
        <position position="177"/>
    </location>
</feature>
<feature type="binding site" evidence="1">
    <location>
        <begin position="7"/>
        <end position="13"/>
    </location>
    <ligand>
        <name>NAD(+)</name>
        <dbReference type="ChEBI" id="CHEBI:57540"/>
    </ligand>
</feature>
<feature type="binding site" evidence="1">
    <location>
        <position position="34"/>
    </location>
    <ligand>
        <name>NAD(+)</name>
        <dbReference type="ChEBI" id="CHEBI:57540"/>
    </ligand>
</feature>
<feature type="binding site" evidence="1">
    <location>
        <position position="81"/>
    </location>
    <ligand>
        <name>substrate</name>
    </ligand>
</feature>
<feature type="binding site" evidence="1">
    <location>
        <position position="87"/>
    </location>
    <ligand>
        <name>substrate</name>
    </ligand>
</feature>
<feature type="binding site" evidence="1">
    <location>
        <position position="94"/>
    </location>
    <ligand>
        <name>NAD(+)</name>
        <dbReference type="ChEBI" id="CHEBI:57540"/>
    </ligand>
</feature>
<feature type="binding site" evidence="1">
    <location>
        <begin position="117"/>
        <end position="119"/>
    </location>
    <ligand>
        <name>NAD(+)</name>
        <dbReference type="ChEBI" id="CHEBI:57540"/>
    </ligand>
</feature>
<feature type="binding site" evidence="1">
    <location>
        <position position="119"/>
    </location>
    <ligand>
        <name>substrate</name>
    </ligand>
</feature>
<feature type="binding site" evidence="1">
    <location>
        <position position="153"/>
    </location>
    <ligand>
        <name>substrate</name>
    </ligand>
</feature>
<feature type="binding site" evidence="1">
    <location>
        <position position="227"/>
    </location>
    <ligand>
        <name>NAD(+)</name>
        <dbReference type="ChEBI" id="CHEBI:57540"/>
    </ligand>
</feature>